<accession>A5F4D2</accession>
<accession>C3M2I3</accession>
<comment type="function">
    <text evidence="1">Catalyzes the synthesis of the hydroxymethylpyrimidine phosphate (HMP-P) moiety of thiamine from aminoimidazole ribotide (AIR) in a radical S-adenosyl-L-methionine (SAM)-dependent reaction.</text>
</comment>
<comment type="catalytic activity">
    <reaction evidence="1">
        <text>5-amino-1-(5-phospho-beta-D-ribosyl)imidazole + S-adenosyl-L-methionine = 4-amino-2-methyl-5-(phosphooxymethyl)pyrimidine + CO + 5'-deoxyadenosine + formate + L-methionine + 3 H(+)</text>
        <dbReference type="Rhea" id="RHEA:24840"/>
        <dbReference type="ChEBI" id="CHEBI:15378"/>
        <dbReference type="ChEBI" id="CHEBI:15740"/>
        <dbReference type="ChEBI" id="CHEBI:17245"/>
        <dbReference type="ChEBI" id="CHEBI:17319"/>
        <dbReference type="ChEBI" id="CHEBI:57844"/>
        <dbReference type="ChEBI" id="CHEBI:58354"/>
        <dbReference type="ChEBI" id="CHEBI:59789"/>
        <dbReference type="ChEBI" id="CHEBI:137981"/>
        <dbReference type="EC" id="4.1.99.17"/>
    </reaction>
</comment>
<comment type="cofactor">
    <cofactor evidence="1">
        <name>[4Fe-4S] cluster</name>
        <dbReference type="ChEBI" id="CHEBI:49883"/>
    </cofactor>
    <text evidence="1">Binds 1 [4Fe-4S] cluster per subunit. The cluster is coordinated with 3 cysteines and an exchangeable S-adenosyl-L-methionine.</text>
</comment>
<comment type="pathway">
    <text evidence="1">Cofactor biosynthesis; thiamine diphosphate biosynthesis.</text>
</comment>
<comment type="subunit">
    <text evidence="1">Homodimer.</text>
</comment>
<comment type="similarity">
    <text evidence="1">Belongs to the ThiC family.</text>
</comment>
<organism>
    <name type="scientific">Vibrio cholerae serotype O1 (strain ATCC 39541 / Classical Ogawa 395 / O395)</name>
    <dbReference type="NCBI Taxonomy" id="345073"/>
    <lineage>
        <taxon>Bacteria</taxon>
        <taxon>Pseudomonadati</taxon>
        <taxon>Pseudomonadota</taxon>
        <taxon>Gammaproteobacteria</taxon>
        <taxon>Vibrionales</taxon>
        <taxon>Vibrionaceae</taxon>
        <taxon>Vibrio</taxon>
    </lineage>
</organism>
<keyword id="KW-0004">4Fe-4S</keyword>
<keyword id="KW-0408">Iron</keyword>
<keyword id="KW-0411">Iron-sulfur</keyword>
<keyword id="KW-0456">Lyase</keyword>
<keyword id="KW-0479">Metal-binding</keyword>
<keyword id="KW-0949">S-adenosyl-L-methionine</keyword>
<keyword id="KW-0784">Thiamine biosynthesis</keyword>
<keyword id="KW-0862">Zinc</keyword>
<feature type="chain" id="PRO_1000071255" description="Phosphomethylpyrimidine synthase">
    <location>
        <begin position="1"/>
        <end position="645"/>
    </location>
</feature>
<feature type="binding site" evidence="1">
    <location>
        <position position="235"/>
    </location>
    <ligand>
        <name>substrate</name>
    </ligand>
</feature>
<feature type="binding site" evidence="1">
    <location>
        <position position="264"/>
    </location>
    <ligand>
        <name>substrate</name>
    </ligand>
</feature>
<feature type="binding site" evidence="1">
    <location>
        <position position="293"/>
    </location>
    <ligand>
        <name>substrate</name>
    </ligand>
</feature>
<feature type="binding site" evidence="1">
    <location>
        <position position="329"/>
    </location>
    <ligand>
        <name>substrate</name>
    </ligand>
</feature>
<feature type="binding site" evidence="1">
    <location>
        <begin position="349"/>
        <end position="351"/>
    </location>
    <ligand>
        <name>substrate</name>
    </ligand>
</feature>
<feature type="binding site" evidence="1">
    <location>
        <begin position="390"/>
        <end position="393"/>
    </location>
    <ligand>
        <name>substrate</name>
    </ligand>
</feature>
<feature type="binding site" evidence="1">
    <location>
        <position position="429"/>
    </location>
    <ligand>
        <name>substrate</name>
    </ligand>
</feature>
<feature type="binding site" evidence="1">
    <location>
        <position position="433"/>
    </location>
    <ligand>
        <name>Zn(2+)</name>
        <dbReference type="ChEBI" id="CHEBI:29105"/>
    </ligand>
</feature>
<feature type="binding site" evidence="1">
    <location>
        <position position="456"/>
    </location>
    <ligand>
        <name>substrate</name>
    </ligand>
</feature>
<feature type="binding site" evidence="1">
    <location>
        <position position="497"/>
    </location>
    <ligand>
        <name>Zn(2+)</name>
        <dbReference type="ChEBI" id="CHEBI:29105"/>
    </ligand>
</feature>
<feature type="binding site" evidence="1">
    <location>
        <position position="577"/>
    </location>
    <ligand>
        <name>[4Fe-4S] cluster</name>
        <dbReference type="ChEBI" id="CHEBI:49883"/>
        <note>4Fe-4S-S-AdoMet</note>
    </ligand>
</feature>
<feature type="binding site" evidence="1">
    <location>
        <position position="580"/>
    </location>
    <ligand>
        <name>[4Fe-4S] cluster</name>
        <dbReference type="ChEBI" id="CHEBI:49883"/>
        <note>4Fe-4S-S-AdoMet</note>
    </ligand>
</feature>
<feature type="binding site" evidence="1">
    <location>
        <position position="585"/>
    </location>
    <ligand>
        <name>[4Fe-4S] cluster</name>
        <dbReference type="ChEBI" id="CHEBI:49883"/>
        <note>4Fe-4S-S-AdoMet</note>
    </ligand>
</feature>
<dbReference type="EC" id="4.1.99.17" evidence="1"/>
<dbReference type="EMBL" id="CP000627">
    <property type="protein sequence ID" value="ABQ21848.1"/>
    <property type="molecule type" value="Genomic_DNA"/>
</dbReference>
<dbReference type="EMBL" id="CP001235">
    <property type="protein sequence ID" value="ACP08147.1"/>
    <property type="molecule type" value="Genomic_DNA"/>
</dbReference>
<dbReference type="RefSeq" id="WP_000071109.1">
    <property type="nucleotide sequence ID" value="NZ_JAACZH010000014.1"/>
</dbReference>
<dbReference type="SMR" id="A5F4D2"/>
<dbReference type="KEGG" id="vco:VC0395_A2452"/>
<dbReference type="KEGG" id="vcr:VC395_0119"/>
<dbReference type="PATRIC" id="fig|345073.21.peg.110"/>
<dbReference type="eggNOG" id="COG0422">
    <property type="taxonomic scope" value="Bacteria"/>
</dbReference>
<dbReference type="HOGENOM" id="CLU_013181_2_1_6"/>
<dbReference type="OrthoDB" id="9805897at2"/>
<dbReference type="UniPathway" id="UPA00060"/>
<dbReference type="Proteomes" id="UP000000249">
    <property type="component" value="Chromosome 2"/>
</dbReference>
<dbReference type="GO" id="GO:0005829">
    <property type="term" value="C:cytosol"/>
    <property type="evidence" value="ECO:0007669"/>
    <property type="project" value="TreeGrafter"/>
</dbReference>
<dbReference type="GO" id="GO:0051539">
    <property type="term" value="F:4 iron, 4 sulfur cluster binding"/>
    <property type="evidence" value="ECO:0007669"/>
    <property type="project" value="UniProtKB-KW"/>
</dbReference>
<dbReference type="GO" id="GO:0016830">
    <property type="term" value="F:carbon-carbon lyase activity"/>
    <property type="evidence" value="ECO:0007669"/>
    <property type="project" value="InterPro"/>
</dbReference>
<dbReference type="GO" id="GO:0008270">
    <property type="term" value="F:zinc ion binding"/>
    <property type="evidence" value="ECO:0007669"/>
    <property type="project" value="UniProtKB-UniRule"/>
</dbReference>
<dbReference type="GO" id="GO:0009228">
    <property type="term" value="P:thiamine biosynthetic process"/>
    <property type="evidence" value="ECO:0007669"/>
    <property type="project" value="UniProtKB-KW"/>
</dbReference>
<dbReference type="GO" id="GO:0009229">
    <property type="term" value="P:thiamine diphosphate biosynthetic process"/>
    <property type="evidence" value="ECO:0007669"/>
    <property type="project" value="UniProtKB-UniRule"/>
</dbReference>
<dbReference type="FunFam" id="3.20.20.540:FF:000001">
    <property type="entry name" value="Phosphomethylpyrimidine synthase"/>
    <property type="match status" value="1"/>
</dbReference>
<dbReference type="Gene3D" id="6.10.250.620">
    <property type="match status" value="1"/>
</dbReference>
<dbReference type="Gene3D" id="3.20.20.540">
    <property type="entry name" value="Radical SAM ThiC family, central domain"/>
    <property type="match status" value="1"/>
</dbReference>
<dbReference type="HAMAP" id="MF_00089">
    <property type="entry name" value="ThiC"/>
    <property type="match status" value="1"/>
</dbReference>
<dbReference type="InterPro" id="IPR037509">
    <property type="entry name" value="ThiC"/>
</dbReference>
<dbReference type="InterPro" id="IPR025747">
    <property type="entry name" value="ThiC-associated_dom"/>
</dbReference>
<dbReference type="InterPro" id="IPR038521">
    <property type="entry name" value="ThiC/Bza_core_dom"/>
</dbReference>
<dbReference type="InterPro" id="IPR002817">
    <property type="entry name" value="ThiC/BzaA/B"/>
</dbReference>
<dbReference type="NCBIfam" id="NF006763">
    <property type="entry name" value="PRK09284.1"/>
    <property type="match status" value="1"/>
</dbReference>
<dbReference type="NCBIfam" id="NF009895">
    <property type="entry name" value="PRK13352.1"/>
    <property type="match status" value="1"/>
</dbReference>
<dbReference type="NCBIfam" id="TIGR00190">
    <property type="entry name" value="thiC"/>
    <property type="match status" value="1"/>
</dbReference>
<dbReference type="PANTHER" id="PTHR30557:SF1">
    <property type="entry name" value="PHOSPHOMETHYLPYRIMIDINE SYNTHASE, CHLOROPLASTIC"/>
    <property type="match status" value="1"/>
</dbReference>
<dbReference type="PANTHER" id="PTHR30557">
    <property type="entry name" value="THIAMINE BIOSYNTHESIS PROTEIN THIC"/>
    <property type="match status" value="1"/>
</dbReference>
<dbReference type="Pfam" id="PF13667">
    <property type="entry name" value="ThiC-associated"/>
    <property type="match status" value="1"/>
</dbReference>
<dbReference type="Pfam" id="PF01964">
    <property type="entry name" value="ThiC_Rad_SAM"/>
    <property type="match status" value="1"/>
</dbReference>
<dbReference type="SFLD" id="SFLDF00407">
    <property type="entry name" value="phosphomethylpyrimidine_syntha"/>
    <property type="match status" value="1"/>
</dbReference>
<dbReference type="SFLD" id="SFLDG01114">
    <property type="entry name" value="phosphomethylpyrimidine_syntha"/>
    <property type="match status" value="1"/>
</dbReference>
<dbReference type="SFLD" id="SFLDS00113">
    <property type="entry name" value="Radical_SAM_Phosphomethylpyrim"/>
    <property type="match status" value="1"/>
</dbReference>
<proteinExistence type="inferred from homology"/>
<evidence type="ECO:0000255" key="1">
    <source>
        <dbReference type="HAMAP-Rule" id="MF_00089"/>
    </source>
</evidence>
<gene>
    <name evidence="1" type="primary">thiC</name>
    <name type="ordered locus">VC0395_A2452</name>
    <name type="ordered locus">VC395_0119</name>
</gene>
<reference key="1">
    <citation type="submission" date="2007-03" db="EMBL/GenBank/DDBJ databases">
        <authorList>
            <person name="Heidelberg J."/>
        </authorList>
    </citation>
    <scope>NUCLEOTIDE SEQUENCE [LARGE SCALE GENOMIC DNA]</scope>
    <source>
        <strain>ATCC 39541 / Classical Ogawa 395 / O395</strain>
    </source>
</reference>
<reference key="2">
    <citation type="journal article" date="2008" name="PLoS ONE">
        <title>A recalibrated molecular clock and independent origins for the cholera pandemic clones.</title>
        <authorList>
            <person name="Feng L."/>
            <person name="Reeves P.R."/>
            <person name="Lan R."/>
            <person name="Ren Y."/>
            <person name="Gao C."/>
            <person name="Zhou Z."/>
            <person name="Ren Y."/>
            <person name="Cheng J."/>
            <person name="Wang W."/>
            <person name="Wang J."/>
            <person name="Qian W."/>
            <person name="Li D."/>
            <person name="Wang L."/>
        </authorList>
    </citation>
    <scope>NUCLEOTIDE SEQUENCE [LARGE SCALE GENOMIC DNA]</scope>
    <source>
        <strain>ATCC 39541 / Classical Ogawa 395 / O395</strain>
    </source>
</reference>
<name>THIC_VIBC3</name>
<sequence>MSNRKQARLEAKRFIDTLSVEPYPNSQKSYLLGSRPDIRVPVREITLSDTLVGGSKDAPIFEPNEPICVYDTSGVYTDPSHDIDLYKGLPKLREEWIEERRDTHILPSMSSHFARERLADETLDELRYGHLPRIRRAMGQHRVTQLHYARQGIITPEMEFVAIRENSRRLAHQDPSLLQQHAGQNFGAHLPDLITPEFVRREIAEGRAIIPCNINHPESEPMIIGRNFLVKVNANIGNSSVSSSIEEEVEKLVWATRWGADTVMDLSTGRNIHETREWILRNSPVPIGTVPMYQALEKVNGVAENLTWEVMRDTLLEQAEQGVDYFTIHAGLLLRYVPMTAKRVTGIVSRGGSIIAKWCLSHHQENFLYTHFREICEICAQYDVALSLGDGLRPGSIADANDEAQFAELRTLGELTQIAWEYDVQVMIEGPGHVPMHLIKANMDEQLKHCHEAPFYTLGPLTTDIAPGYDHITSGIGAAMIGWFGCAMLCYVTPKEHLGLPNKEDVKTGLITYKLAAHAADLAKGHPGAQIRDNALSKARFEFRWEDQFNLALDPVTARAFHDETLPQESGKVAHFCSMCGPKFCSMKISQEVRDYANNQTLDTTVIDLVMPAESIQLAMQDKSREFLASGAELYHPLVKEPIEE</sequence>
<protein>
    <recommendedName>
        <fullName evidence="1">Phosphomethylpyrimidine synthase</fullName>
        <ecNumber evidence="1">4.1.99.17</ecNumber>
    </recommendedName>
    <alternativeName>
        <fullName evidence="1">Hydroxymethylpyrimidine phosphate synthase</fullName>
        <shortName evidence="1">HMP-P synthase</shortName>
        <shortName evidence="1">HMP-phosphate synthase</shortName>
        <shortName evidence="1">HMPP synthase</shortName>
    </alternativeName>
    <alternativeName>
        <fullName evidence="1">Thiamine biosynthesis protein ThiC</fullName>
    </alternativeName>
</protein>